<organism>
    <name type="scientific">Rickettsia africae (strain ESF-5)</name>
    <dbReference type="NCBI Taxonomy" id="347255"/>
    <lineage>
        <taxon>Bacteria</taxon>
        <taxon>Pseudomonadati</taxon>
        <taxon>Pseudomonadota</taxon>
        <taxon>Alphaproteobacteria</taxon>
        <taxon>Rickettsiales</taxon>
        <taxon>Rickettsiaceae</taxon>
        <taxon>Rickettsieae</taxon>
        <taxon>Rickettsia</taxon>
        <taxon>spotted fever group</taxon>
    </lineage>
</organism>
<feature type="chain" id="PRO_1000204292" description="GTP cyclohydrolase 1">
    <location>
        <begin position="1"/>
        <end position="189"/>
    </location>
</feature>
<feature type="binding site" evidence="1">
    <location>
        <position position="79"/>
    </location>
    <ligand>
        <name>Zn(2+)</name>
        <dbReference type="ChEBI" id="CHEBI:29105"/>
    </ligand>
</feature>
<feature type="binding site" evidence="1">
    <location>
        <position position="82"/>
    </location>
    <ligand>
        <name>Zn(2+)</name>
        <dbReference type="ChEBI" id="CHEBI:29105"/>
    </ligand>
</feature>
<feature type="binding site" evidence="1">
    <location>
        <position position="150"/>
    </location>
    <ligand>
        <name>Zn(2+)</name>
        <dbReference type="ChEBI" id="CHEBI:29105"/>
    </ligand>
</feature>
<gene>
    <name evidence="1" type="primary">folE</name>
    <name type="ordered locus">RAF_ORF0489</name>
</gene>
<proteinExistence type="inferred from homology"/>
<sequence length="189" mass="21571">MSKPTREEATEAVRTLLKFIGEDPSREGLLQTPDRVINSYVEIFSGYGKDVAEILNTKFYETCNFQDFILLNIKFTSFCEHHILPFNGTVDIAYIPDNCIVGISKLARIVNIFARRLQIQEKMTVQIAESVQENLKPLGVAVKISAVHSCMSMRGVMQDNSVMNTMHYTGIFAEQQKYRHEFLNLTAKR</sequence>
<dbReference type="EC" id="3.5.4.16" evidence="1"/>
<dbReference type="EMBL" id="CP001612">
    <property type="protein sequence ID" value="ACP53410.1"/>
    <property type="molecule type" value="Genomic_DNA"/>
</dbReference>
<dbReference type="RefSeq" id="WP_012719639.1">
    <property type="nucleotide sequence ID" value="NC_012633.1"/>
</dbReference>
<dbReference type="SMR" id="C3PNA0"/>
<dbReference type="KEGG" id="raf:RAF_ORF0489"/>
<dbReference type="HOGENOM" id="CLU_049768_3_1_5"/>
<dbReference type="UniPathway" id="UPA00848">
    <property type="reaction ID" value="UER00151"/>
</dbReference>
<dbReference type="Proteomes" id="UP000002305">
    <property type="component" value="Chromosome"/>
</dbReference>
<dbReference type="GO" id="GO:0005737">
    <property type="term" value="C:cytoplasm"/>
    <property type="evidence" value="ECO:0007669"/>
    <property type="project" value="TreeGrafter"/>
</dbReference>
<dbReference type="GO" id="GO:0005525">
    <property type="term" value="F:GTP binding"/>
    <property type="evidence" value="ECO:0007669"/>
    <property type="project" value="UniProtKB-KW"/>
</dbReference>
<dbReference type="GO" id="GO:0003934">
    <property type="term" value="F:GTP cyclohydrolase I activity"/>
    <property type="evidence" value="ECO:0007669"/>
    <property type="project" value="UniProtKB-UniRule"/>
</dbReference>
<dbReference type="GO" id="GO:0008270">
    <property type="term" value="F:zinc ion binding"/>
    <property type="evidence" value="ECO:0007669"/>
    <property type="project" value="UniProtKB-UniRule"/>
</dbReference>
<dbReference type="GO" id="GO:0006730">
    <property type="term" value="P:one-carbon metabolic process"/>
    <property type="evidence" value="ECO:0007669"/>
    <property type="project" value="UniProtKB-UniRule"/>
</dbReference>
<dbReference type="GO" id="GO:0006729">
    <property type="term" value="P:tetrahydrobiopterin biosynthetic process"/>
    <property type="evidence" value="ECO:0007669"/>
    <property type="project" value="TreeGrafter"/>
</dbReference>
<dbReference type="GO" id="GO:0046654">
    <property type="term" value="P:tetrahydrofolate biosynthetic process"/>
    <property type="evidence" value="ECO:0007669"/>
    <property type="project" value="UniProtKB-UniRule"/>
</dbReference>
<dbReference type="FunFam" id="3.30.1130.10:FF:000001">
    <property type="entry name" value="GTP cyclohydrolase 1"/>
    <property type="match status" value="1"/>
</dbReference>
<dbReference type="Gene3D" id="1.10.286.10">
    <property type="match status" value="1"/>
</dbReference>
<dbReference type="Gene3D" id="3.30.1130.10">
    <property type="match status" value="1"/>
</dbReference>
<dbReference type="HAMAP" id="MF_00223">
    <property type="entry name" value="FolE"/>
    <property type="match status" value="1"/>
</dbReference>
<dbReference type="InterPro" id="IPR043133">
    <property type="entry name" value="GTP-CH-I_C/QueF"/>
</dbReference>
<dbReference type="InterPro" id="IPR043134">
    <property type="entry name" value="GTP-CH-I_N"/>
</dbReference>
<dbReference type="InterPro" id="IPR001474">
    <property type="entry name" value="GTP_CycHdrlase_I"/>
</dbReference>
<dbReference type="InterPro" id="IPR018234">
    <property type="entry name" value="GTP_CycHdrlase_I_CS"/>
</dbReference>
<dbReference type="InterPro" id="IPR020602">
    <property type="entry name" value="GTP_CycHdrlase_I_dom"/>
</dbReference>
<dbReference type="NCBIfam" id="TIGR00063">
    <property type="entry name" value="folE"/>
    <property type="match status" value="1"/>
</dbReference>
<dbReference type="NCBIfam" id="NF006825">
    <property type="entry name" value="PRK09347.1-2"/>
    <property type="match status" value="1"/>
</dbReference>
<dbReference type="NCBIfam" id="NF006826">
    <property type="entry name" value="PRK09347.1-3"/>
    <property type="match status" value="1"/>
</dbReference>
<dbReference type="PANTHER" id="PTHR11109:SF7">
    <property type="entry name" value="GTP CYCLOHYDROLASE 1"/>
    <property type="match status" value="1"/>
</dbReference>
<dbReference type="PANTHER" id="PTHR11109">
    <property type="entry name" value="GTP CYCLOHYDROLASE I"/>
    <property type="match status" value="1"/>
</dbReference>
<dbReference type="Pfam" id="PF01227">
    <property type="entry name" value="GTP_cyclohydroI"/>
    <property type="match status" value="1"/>
</dbReference>
<dbReference type="SUPFAM" id="SSF55620">
    <property type="entry name" value="Tetrahydrobiopterin biosynthesis enzymes-like"/>
    <property type="match status" value="1"/>
</dbReference>
<dbReference type="PROSITE" id="PS00859">
    <property type="entry name" value="GTP_CYCLOHYDROL_1_1"/>
    <property type="match status" value="1"/>
</dbReference>
<dbReference type="PROSITE" id="PS00860">
    <property type="entry name" value="GTP_CYCLOHYDROL_1_2"/>
    <property type="match status" value="1"/>
</dbReference>
<name>GCH1_RICAE</name>
<reference key="1">
    <citation type="journal article" date="2009" name="BMC Genomics">
        <title>Analysis of the Rickettsia africae genome reveals that virulence acquisition in Rickettsia species may be explained by genome reduction.</title>
        <authorList>
            <person name="Fournier P.-E."/>
            <person name="El Karkouri K."/>
            <person name="Leroy Q."/>
            <person name="Robert C."/>
            <person name="Giumelli B."/>
            <person name="Renesto P."/>
            <person name="Socolovschi C."/>
            <person name="Parola P."/>
            <person name="Audic S."/>
            <person name="Raoult D."/>
        </authorList>
    </citation>
    <scope>NUCLEOTIDE SEQUENCE [LARGE SCALE GENOMIC DNA]</scope>
    <source>
        <strain>ESF-5</strain>
    </source>
</reference>
<accession>C3PNA0</accession>
<protein>
    <recommendedName>
        <fullName evidence="1">GTP cyclohydrolase 1</fullName>
        <ecNumber evidence="1">3.5.4.16</ecNumber>
    </recommendedName>
    <alternativeName>
        <fullName evidence="1">GTP cyclohydrolase I</fullName>
        <shortName evidence="1">GTP-CH-I</shortName>
    </alternativeName>
</protein>
<comment type="catalytic activity">
    <reaction evidence="1">
        <text>GTP + H2O = 7,8-dihydroneopterin 3'-triphosphate + formate + H(+)</text>
        <dbReference type="Rhea" id="RHEA:17473"/>
        <dbReference type="ChEBI" id="CHEBI:15377"/>
        <dbReference type="ChEBI" id="CHEBI:15378"/>
        <dbReference type="ChEBI" id="CHEBI:15740"/>
        <dbReference type="ChEBI" id="CHEBI:37565"/>
        <dbReference type="ChEBI" id="CHEBI:58462"/>
        <dbReference type="EC" id="3.5.4.16"/>
    </reaction>
</comment>
<comment type="pathway">
    <text evidence="1">Cofactor biosynthesis; 7,8-dihydroneopterin triphosphate biosynthesis; 7,8-dihydroneopterin triphosphate from GTP: step 1/1.</text>
</comment>
<comment type="subunit">
    <text evidence="1">Homomer.</text>
</comment>
<comment type="similarity">
    <text evidence="1">Belongs to the GTP cyclohydrolase I family.</text>
</comment>
<keyword id="KW-0342">GTP-binding</keyword>
<keyword id="KW-0378">Hydrolase</keyword>
<keyword id="KW-0479">Metal-binding</keyword>
<keyword id="KW-0547">Nucleotide-binding</keyword>
<keyword id="KW-0554">One-carbon metabolism</keyword>
<keyword id="KW-0862">Zinc</keyword>
<evidence type="ECO:0000255" key="1">
    <source>
        <dbReference type="HAMAP-Rule" id="MF_00223"/>
    </source>
</evidence>